<proteinExistence type="inferred from homology"/>
<organism>
    <name type="scientific">Neosartorya fischeri (strain ATCC 1020 / DSM 3700 / CBS 544.65 / FGSC A1164 / JCM 1740 / NRRL 181 / WB 181)</name>
    <name type="common">Aspergillus fischerianus</name>
    <dbReference type="NCBI Taxonomy" id="331117"/>
    <lineage>
        <taxon>Eukaryota</taxon>
        <taxon>Fungi</taxon>
        <taxon>Dikarya</taxon>
        <taxon>Ascomycota</taxon>
        <taxon>Pezizomycotina</taxon>
        <taxon>Eurotiomycetes</taxon>
        <taxon>Eurotiomycetidae</taxon>
        <taxon>Eurotiales</taxon>
        <taxon>Aspergillaceae</taxon>
        <taxon>Aspergillus</taxon>
        <taxon>Aspergillus subgen. Fumigati</taxon>
    </lineage>
</organism>
<accession>A1D699</accession>
<reference key="1">
    <citation type="journal article" date="2008" name="PLoS Genet.">
        <title>Genomic islands in the pathogenic filamentous fungus Aspergillus fumigatus.</title>
        <authorList>
            <person name="Fedorova N.D."/>
            <person name="Khaldi N."/>
            <person name="Joardar V.S."/>
            <person name="Maiti R."/>
            <person name="Amedeo P."/>
            <person name="Anderson M.J."/>
            <person name="Crabtree J."/>
            <person name="Silva J.C."/>
            <person name="Badger J.H."/>
            <person name="Albarraq A."/>
            <person name="Angiuoli S."/>
            <person name="Bussey H."/>
            <person name="Bowyer P."/>
            <person name="Cotty P.J."/>
            <person name="Dyer P.S."/>
            <person name="Egan A."/>
            <person name="Galens K."/>
            <person name="Fraser-Liggett C.M."/>
            <person name="Haas B.J."/>
            <person name="Inman J.M."/>
            <person name="Kent R."/>
            <person name="Lemieux S."/>
            <person name="Malavazi I."/>
            <person name="Orvis J."/>
            <person name="Roemer T."/>
            <person name="Ronning C.M."/>
            <person name="Sundaram J.P."/>
            <person name="Sutton G."/>
            <person name="Turner G."/>
            <person name="Venter J.C."/>
            <person name="White O.R."/>
            <person name="Whitty B.R."/>
            <person name="Youngman P."/>
            <person name="Wolfe K.H."/>
            <person name="Goldman G.H."/>
            <person name="Wortman J.R."/>
            <person name="Jiang B."/>
            <person name="Denning D.W."/>
            <person name="Nierman W.C."/>
        </authorList>
    </citation>
    <scope>NUCLEOTIDE SEQUENCE [LARGE SCALE GENOMIC DNA]</scope>
    <source>
        <strain>ATCC 1020 / DSM 3700 / CBS 544.65 / FGSC A1164 / JCM 1740 / NRRL 181 / WB 181</strain>
    </source>
</reference>
<sequence length="640" mass="71002">MAPKPPSGTSSRAWDAVTPALSEWVLEAMSSMGFTRMTPVQASAIPLFMAHKDVVVEAVTGSGKTLSFLIPVVEKLLRLEEPIKKHHIGAIIISPTRELASQIYNVLSSLLAFHPPSAAAINPSEDDDAPRPKFPSSTLKVVPQLLLGGSTTPAEDLSTFLKRSPNVLVSTPGRLLELLSSPHVHCPQSSFEMLVLDEADRLLDLGFKETLQNILRRLPKQRRTGLFSASVSEAVDQIVRVGLRNPVKVMVKVKGGSGVDDKRTPASLQMTYLTTPPSHKFAALKRILSSVQPTPLKTIFFVSTCSGVDYLSAILPLLLGDDFLLIPLHGKHQANVRQKNFNRFINSHDPAILLTTDVAARGLDIPSVDLVVQIDPPSDPKSFIHRCGRAGRAGRRGLSVVLLHPGREEDYVSFLEVRKTPVVPFSPLITFSDADAAAATATARKAVLADRALHDRGQKAFVSWFRSYSKHQASSIFRVSDLDWEALGKAWGLLKLPKMPELRNFTGDKTLGVSLDWNNYAYKDKQREKRRKELLQEAAESGATQSTSNKRRATESVAWSQQAESKNKKLKRREQKKSKHEKARWEKMTEEEKQKVLETEKMVEELRKKNEEERRLRRAAAKAAGAKADGDDEEEFQGFD</sequence>
<gene>
    <name evidence="1" type="primary">spb4</name>
    <name type="ORF">NFIA_064070</name>
</gene>
<evidence type="ECO:0000250" key="1">
    <source>
        <dbReference type="UniProtKB" id="P25808"/>
    </source>
</evidence>
<evidence type="ECO:0000255" key="2"/>
<evidence type="ECO:0000255" key="3">
    <source>
        <dbReference type="PROSITE-ProRule" id="PRU00541"/>
    </source>
</evidence>
<evidence type="ECO:0000255" key="4">
    <source>
        <dbReference type="PROSITE-ProRule" id="PRU00542"/>
    </source>
</evidence>
<evidence type="ECO:0000256" key="5">
    <source>
        <dbReference type="SAM" id="MobiDB-lite"/>
    </source>
</evidence>
<evidence type="ECO:0000305" key="6"/>
<keyword id="KW-0067">ATP-binding</keyword>
<keyword id="KW-0175">Coiled coil</keyword>
<keyword id="KW-0347">Helicase</keyword>
<keyword id="KW-0378">Hydrolase</keyword>
<keyword id="KW-0547">Nucleotide-binding</keyword>
<keyword id="KW-0539">Nucleus</keyword>
<keyword id="KW-1185">Reference proteome</keyword>
<keyword id="KW-0690">Ribosome biogenesis</keyword>
<keyword id="KW-0694">RNA-binding</keyword>
<keyword id="KW-0698">rRNA processing</keyword>
<feature type="chain" id="PRO_0000282706" description="ATP-dependent rRNA helicase spb4">
    <location>
        <begin position="1"/>
        <end position="640"/>
    </location>
</feature>
<feature type="domain" description="Helicase ATP-binding" evidence="3">
    <location>
        <begin position="45"/>
        <end position="249"/>
    </location>
</feature>
<feature type="domain" description="Helicase C-terminal" evidence="4">
    <location>
        <begin position="283"/>
        <end position="437"/>
    </location>
</feature>
<feature type="region of interest" description="Disordered" evidence="5">
    <location>
        <begin position="531"/>
        <end position="595"/>
    </location>
</feature>
<feature type="region of interest" description="Disordered" evidence="5">
    <location>
        <begin position="607"/>
        <end position="640"/>
    </location>
</feature>
<feature type="coiled-coil region" evidence="2">
    <location>
        <begin position="521"/>
        <end position="629"/>
    </location>
</feature>
<feature type="short sequence motif" description="Q motif" evidence="6">
    <location>
        <begin position="14"/>
        <end position="42"/>
    </location>
</feature>
<feature type="short sequence motif" description="DEAD box" evidence="6">
    <location>
        <begin position="197"/>
        <end position="200"/>
    </location>
</feature>
<feature type="compositionally biased region" description="Basic residues" evidence="5">
    <location>
        <begin position="568"/>
        <end position="582"/>
    </location>
</feature>
<feature type="compositionally biased region" description="Basic and acidic residues" evidence="5">
    <location>
        <begin position="583"/>
        <end position="595"/>
    </location>
</feature>
<feature type="compositionally biased region" description="Acidic residues" evidence="5">
    <location>
        <begin position="630"/>
        <end position="640"/>
    </location>
</feature>
<feature type="binding site" evidence="3">
    <location>
        <begin position="58"/>
        <end position="65"/>
    </location>
    <ligand>
        <name>ATP</name>
        <dbReference type="ChEBI" id="CHEBI:30616"/>
    </ligand>
</feature>
<dbReference type="EC" id="3.6.4.13" evidence="1"/>
<dbReference type="EMBL" id="DS027690">
    <property type="protein sequence ID" value="EAW21243.1"/>
    <property type="molecule type" value="Genomic_DNA"/>
</dbReference>
<dbReference type="RefSeq" id="XP_001263140.1">
    <property type="nucleotide sequence ID" value="XM_001263139.1"/>
</dbReference>
<dbReference type="SMR" id="A1D699"/>
<dbReference type="STRING" id="331117.A1D699"/>
<dbReference type="EnsemblFungi" id="EAW21243">
    <property type="protein sequence ID" value="EAW21243"/>
    <property type="gene ID" value="NFIA_064070"/>
</dbReference>
<dbReference type="GeneID" id="4589661"/>
<dbReference type="KEGG" id="nfi:NFIA_064070"/>
<dbReference type="VEuPathDB" id="FungiDB:NFIA_064070"/>
<dbReference type="eggNOG" id="KOG0345">
    <property type="taxonomic scope" value="Eukaryota"/>
</dbReference>
<dbReference type="HOGENOM" id="CLU_003041_26_4_1"/>
<dbReference type="OMA" id="AYKEHEC"/>
<dbReference type="OrthoDB" id="7396459at2759"/>
<dbReference type="Proteomes" id="UP000006702">
    <property type="component" value="Unassembled WGS sequence"/>
</dbReference>
<dbReference type="GO" id="GO:0030686">
    <property type="term" value="C:90S preribosome"/>
    <property type="evidence" value="ECO:0007669"/>
    <property type="project" value="EnsemblFungi"/>
</dbReference>
<dbReference type="GO" id="GO:0005730">
    <property type="term" value="C:nucleolus"/>
    <property type="evidence" value="ECO:0007669"/>
    <property type="project" value="UniProtKB-SubCell"/>
</dbReference>
<dbReference type="GO" id="GO:0005654">
    <property type="term" value="C:nucleoplasm"/>
    <property type="evidence" value="ECO:0007669"/>
    <property type="project" value="EnsemblFungi"/>
</dbReference>
<dbReference type="GO" id="GO:0030687">
    <property type="term" value="C:preribosome, large subunit precursor"/>
    <property type="evidence" value="ECO:0007669"/>
    <property type="project" value="EnsemblFungi"/>
</dbReference>
<dbReference type="GO" id="GO:0005524">
    <property type="term" value="F:ATP binding"/>
    <property type="evidence" value="ECO:0007669"/>
    <property type="project" value="UniProtKB-KW"/>
</dbReference>
<dbReference type="GO" id="GO:0016887">
    <property type="term" value="F:ATP hydrolysis activity"/>
    <property type="evidence" value="ECO:0007669"/>
    <property type="project" value="RHEA"/>
</dbReference>
<dbReference type="GO" id="GO:0003723">
    <property type="term" value="F:RNA binding"/>
    <property type="evidence" value="ECO:0007669"/>
    <property type="project" value="UniProtKB-KW"/>
</dbReference>
<dbReference type="GO" id="GO:0003724">
    <property type="term" value="F:RNA helicase activity"/>
    <property type="evidence" value="ECO:0007669"/>
    <property type="project" value="UniProtKB-EC"/>
</dbReference>
<dbReference type="GO" id="GO:1902626">
    <property type="term" value="P:assembly of large subunit precursor of preribosome"/>
    <property type="evidence" value="ECO:0007669"/>
    <property type="project" value="EnsemblFungi"/>
</dbReference>
<dbReference type="GO" id="GO:0000470">
    <property type="term" value="P:maturation of LSU-rRNA"/>
    <property type="evidence" value="ECO:0007669"/>
    <property type="project" value="EnsemblFungi"/>
</dbReference>
<dbReference type="CDD" id="cd17960">
    <property type="entry name" value="DEADc_DDX55"/>
    <property type="match status" value="1"/>
</dbReference>
<dbReference type="CDD" id="cd18787">
    <property type="entry name" value="SF2_C_DEAD"/>
    <property type="match status" value="1"/>
</dbReference>
<dbReference type="Gene3D" id="3.40.50.300">
    <property type="entry name" value="P-loop containing nucleotide triphosphate hydrolases"/>
    <property type="match status" value="2"/>
</dbReference>
<dbReference type="InterPro" id="IPR056330">
    <property type="entry name" value="CTT_SPB4"/>
</dbReference>
<dbReference type="InterPro" id="IPR011545">
    <property type="entry name" value="DEAD/DEAH_box_helicase_dom"/>
</dbReference>
<dbReference type="InterPro" id="IPR014001">
    <property type="entry name" value="Helicase_ATP-bd"/>
</dbReference>
<dbReference type="InterPro" id="IPR001650">
    <property type="entry name" value="Helicase_C-like"/>
</dbReference>
<dbReference type="InterPro" id="IPR027417">
    <property type="entry name" value="P-loop_NTPase"/>
</dbReference>
<dbReference type="InterPro" id="IPR000629">
    <property type="entry name" value="RNA-helicase_DEAD-box_CS"/>
</dbReference>
<dbReference type="InterPro" id="IPR014014">
    <property type="entry name" value="RNA_helicase_DEAD_Q_motif"/>
</dbReference>
<dbReference type="InterPro" id="IPR025313">
    <property type="entry name" value="SPB4-like_CTE"/>
</dbReference>
<dbReference type="PANTHER" id="PTHR24031">
    <property type="entry name" value="RNA HELICASE"/>
    <property type="match status" value="1"/>
</dbReference>
<dbReference type="Pfam" id="PF13959">
    <property type="entry name" value="CTE_SPB4"/>
    <property type="match status" value="1"/>
</dbReference>
<dbReference type="Pfam" id="PF23681">
    <property type="entry name" value="CTT_SPB4"/>
    <property type="match status" value="1"/>
</dbReference>
<dbReference type="Pfam" id="PF00270">
    <property type="entry name" value="DEAD"/>
    <property type="match status" value="1"/>
</dbReference>
<dbReference type="Pfam" id="PF00271">
    <property type="entry name" value="Helicase_C"/>
    <property type="match status" value="1"/>
</dbReference>
<dbReference type="SMART" id="SM00487">
    <property type="entry name" value="DEXDc"/>
    <property type="match status" value="1"/>
</dbReference>
<dbReference type="SMART" id="SM01178">
    <property type="entry name" value="DUF4217"/>
    <property type="match status" value="1"/>
</dbReference>
<dbReference type="SMART" id="SM00490">
    <property type="entry name" value="HELICc"/>
    <property type="match status" value="1"/>
</dbReference>
<dbReference type="SUPFAM" id="SSF52540">
    <property type="entry name" value="P-loop containing nucleoside triphosphate hydrolases"/>
    <property type="match status" value="1"/>
</dbReference>
<dbReference type="PROSITE" id="PS00039">
    <property type="entry name" value="DEAD_ATP_HELICASE"/>
    <property type="match status" value="1"/>
</dbReference>
<dbReference type="PROSITE" id="PS51192">
    <property type="entry name" value="HELICASE_ATP_BIND_1"/>
    <property type="match status" value="1"/>
</dbReference>
<dbReference type="PROSITE" id="PS51194">
    <property type="entry name" value="HELICASE_CTER"/>
    <property type="match status" value="1"/>
</dbReference>
<dbReference type="PROSITE" id="PS51195">
    <property type="entry name" value="Q_MOTIF"/>
    <property type="match status" value="1"/>
</dbReference>
<protein>
    <recommendedName>
        <fullName evidence="6">ATP-dependent rRNA helicase spb4</fullName>
        <ecNumber evidence="1">3.6.4.13</ecNumber>
    </recommendedName>
</protein>
<name>SPB4_NEOFI</name>
<comment type="function">
    <text evidence="1">ATP-binding RNA helicase involved in the biogenesis of 60S ribosomal subunits. Binds 90S pre-ribosomal particles and dissociates from pre-60S ribosomal particles after processing of 27SB pre-rRNA. Required for the normal formation of 18S rRNA through the processing of pre-rRNAs at sites A0, A1 and A2, and the normal formation of 25S and 5.8S rRNAs through the processing of pre-rRNAs at sites C1 and C2.</text>
</comment>
<comment type="catalytic activity">
    <reaction evidence="1">
        <text>ATP + H2O = ADP + phosphate + H(+)</text>
        <dbReference type="Rhea" id="RHEA:13065"/>
        <dbReference type="ChEBI" id="CHEBI:15377"/>
        <dbReference type="ChEBI" id="CHEBI:15378"/>
        <dbReference type="ChEBI" id="CHEBI:30616"/>
        <dbReference type="ChEBI" id="CHEBI:43474"/>
        <dbReference type="ChEBI" id="CHEBI:456216"/>
        <dbReference type="EC" id="3.6.4.13"/>
    </reaction>
</comment>
<comment type="subunit">
    <text evidence="1">Component of pre-60S ribosomal complexes.</text>
</comment>
<comment type="subcellular location">
    <subcellularLocation>
        <location evidence="1">Nucleus</location>
        <location evidence="1">Nucleolus</location>
    </subcellularLocation>
</comment>
<comment type="domain">
    <text>The Q motif is unique to and characteristic of the DEAD box family of RNA helicases and controls ATP binding and hydrolysis.</text>
</comment>
<comment type="similarity">
    <text evidence="6">Belongs to the DEAD box helicase family. DDX55/SPB4 subfamily.</text>
</comment>